<proteinExistence type="evidence at protein level"/>
<protein>
    <recommendedName>
        <fullName evidence="13">Small ribosomal subunit protein uS5</fullName>
    </recommendedName>
    <alternativeName>
        <fullName>40S ribosomal protein S2</fullName>
    </alternativeName>
    <alternativeName>
        <fullName>40S ribosomal protein S4</fullName>
    </alternativeName>
    <alternativeName>
        <fullName>Protein LLRep3</fullName>
    </alternativeName>
</protein>
<feature type="initiator methionine" description="Removed" evidence="18">
    <location>
        <position position="1"/>
    </location>
</feature>
<feature type="chain" id="PRO_0000131673" description="Small ribosomal subunit protein uS5">
    <location>
        <begin position="2"/>
        <end position="293"/>
    </location>
</feature>
<feature type="domain" description="S5 DRBM" evidence="2">
    <location>
        <begin position="102"/>
        <end position="165"/>
    </location>
</feature>
<feature type="region of interest" description="Disordered" evidence="3">
    <location>
        <begin position="1"/>
        <end position="56"/>
    </location>
</feature>
<feature type="compositionally biased region" description="Gly residues" evidence="3">
    <location>
        <begin position="7"/>
        <end position="34"/>
    </location>
</feature>
<feature type="compositionally biased region" description="Basic residues" evidence="3">
    <location>
        <begin position="35"/>
        <end position="51"/>
    </location>
</feature>
<feature type="modified residue" description="N-acetylalanine" evidence="18">
    <location>
        <position position="2"/>
    </location>
</feature>
<feature type="modified residue" description="Phosphothreonine" evidence="19">
    <location>
        <position position="252"/>
    </location>
</feature>
<feature type="modified residue" description="N6-acetyllysine" evidence="16">
    <location>
        <position position="263"/>
    </location>
</feature>
<feature type="modified residue" description="Phosphoserine" evidence="15 17 19">
    <location>
        <position position="264"/>
    </location>
</feature>
<feature type="modified residue" description="Phosphothreonine" evidence="19">
    <location>
        <position position="270"/>
    </location>
</feature>
<feature type="modified residue" description="N6-acetyllysine; alternate" evidence="16">
    <location>
        <position position="275"/>
    </location>
</feature>
<feature type="modified residue" description="Phosphoserine" evidence="17">
    <location>
        <position position="281"/>
    </location>
</feature>
<feature type="cross-link" description="Glycyl lysine isopeptide (Lys-Gly) (interchain with G-Cter in ubiquitin)" evidence="10 12">
    <location>
        <position position="54"/>
    </location>
</feature>
<feature type="cross-link" description="Glycyl lysine isopeptide (Lys-Gly) (interchain with G-Cter in ubiquitin)" evidence="7 10 12">
    <location>
        <position position="58"/>
    </location>
</feature>
<feature type="cross-link" description="Glycyl lysine isopeptide (Lys-Gly) (interchain with G-Cter in SUMO1); alternate" evidence="20">
    <location>
        <position position="275"/>
    </location>
</feature>
<feature type="cross-link" description="Glycyl lysine isopeptide (Lys-Gly) (interchain with G-Cter in SUMO2); alternate" evidence="20 21">
    <location>
        <position position="275"/>
    </location>
</feature>
<feature type="cross-link" description="Glycyl lysine isopeptide (Lys-Gly) (interchain with G-Cter in ubiquitin); alternate" evidence="7">
    <location>
        <position position="275"/>
    </location>
</feature>
<feature type="mutagenesis site" description="Abolished ubiquitination and degradation by RNF10." evidence="12">
    <original>KAEDK</original>
    <variation>RAEDR</variation>
    <location>
        <begin position="54"/>
        <end position="58"/>
    </location>
</feature>
<feature type="mutagenesis site" description="Does not affect readthrough on the poly(A)-stall sequences; when associated with R-275." evidence="7">
    <original>K</original>
    <variation>R</variation>
    <location>
        <position position="58"/>
    </location>
</feature>
<feature type="mutagenesis site" description="Does not affect readthrough on the poly(A)-stall sequences; when associated with R-58." evidence="7">
    <original>K</original>
    <variation>R</variation>
    <location>
        <position position="275"/>
    </location>
</feature>
<feature type="helix" evidence="24">
    <location>
        <begin position="65"/>
        <end position="71"/>
    </location>
</feature>
<feature type="turn" evidence="23">
    <location>
        <begin position="72"/>
        <end position="74"/>
    </location>
</feature>
<feature type="helix" evidence="24">
    <location>
        <begin position="78"/>
        <end position="83"/>
    </location>
</feature>
<feature type="helix" evidence="24">
    <location>
        <begin position="91"/>
        <end position="98"/>
    </location>
</feature>
<feature type="turn" evidence="24">
    <location>
        <begin position="99"/>
        <end position="101"/>
    </location>
</feature>
<feature type="strand" evidence="24">
    <location>
        <begin position="103"/>
        <end position="116"/>
    </location>
</feature>
<feature type="strand" evidence="24">
    <location>
        <begin position="119"/>
        <end position="131"/>
    </location>
</feature>
<feature type="strand" evidence="24">
    <location>
        <begin position="133"/>
        <end position="146"/>
    </location>
</feature>
<feature type="helix" evidence="24">
    <location>
        <begin position="147"/>
        <end position="160"/>
    </location>
</feature>
<feature type="strand" evidence="22">
    <location>
        <begin position="161"/>
        <end position="164"/>
    </location>
</feature>
<feature type="strand" evidence="24">
    <location>
        <begin position="170"/>
        <end position="172"/>
    </location>
</feature>
<feature type="strand" evidence="24">
    <location>
        <begin position="184"/>
        <end position="188"/>
    </location>
</feature>
<feature type="strand" evidence="24">
    <location>
        <begin position="191"/>
        <end position="196"/>
    </location>
</feature>
<feature type="strand" evidence="24">
    <location>
        <begin position="204"/>
        <end position="206"/>
    </location>
</feature>
<feature type="helix" evidence="24">
    <location>
        <begin position="208"/>
        <end position="216"/>
    </location>
</feature>
<feature type="strand" evidence="24">
    <location>
        <begin position="222"/>
        <end position="228"/>
    </location>
</feature>
<feature type="helix" evidence="24">
    <location>
        <begin position="233"/>
        <end position="245"/>
    </location>
</feature>
<feature type="helix" evidence="24">
    <location>
        <begin position="246"/>
        <end position="249"/>
    </location>
</feature>
<feature type="helix" evidence="24">
    <location>
        <begin position="253"/>
        <end position="255"/>
    </location>
</feature>
<feature type="helix" evidence="24">
    <location>
        <begin position="265"/>
        <end position="268"/>
    </location>
</feature>
<feature type="helix" evidence="24">
    <location>
        <begin position="270"/>
        <end position="276"/>
    </location>
</feature>
<organism>
    <name type="scientific">Homo sapiens</name>
    <name type="common">Human</name>
    <dbReference type="NCBI Taxonomy" id="9606"/>
    <lineage>
        <taxon>Eukaryota</taxon>
        <taxon>Metazoa</taxon>
        <taxon>Chordata</taxon>
        <taxon>Craniata</taxon>
        <taxon>Vertebrata</taxon>
        <taxon>Euteleostomi</taxon>
        <taxon>Mammalia</taxon>
        <taxon>Eutheria</taxon>
        <taxon>Euarchontoglires</taxon>
        <taxon>Primates</taxon>
        <taxon>Haplorrhini</taxon>
        <taxon>Catarrhini</taxon>
        <taxon>Hominidae</taxon>
        <taxon>Homo</taxon>
    </lineage>
</organism>
<evidence type="ECO:0000250" key="1">
    <source>
        <dbReference type="UniProtKB" id="P25443"/>
    </source>
</evidence>
<evidence type="ECO:0000255" key="2">
    <source>
        <dbReference type="PROSITE-ProRule" id="PRU00268"/>
    </source>
</evidence>
<evidence type="ECO:0000256" key="3">
    <source>
        <dbReference type="SAM" id="MobiDB-lite"/>
    </source>
</evidence>
<evidence type="ECO:0000269" key="4">
    <source>
    </source>
</evidence>
<evidence type="ECO:0000269" key="5">
    <source>
    </source>
</evidence>
<evidence type="ECO:0000269" key="6">
    <source>
    </source>
</evidence>
<evidence type="ECO:0000269" key="7">
    <source>
    </source>
</evidence>
<evidence type="ECO:0000269" key="8">
    <source>
    </source>
</evidence>
<evidence type="ECO:0000269" key="9">
    <source>
    </source>
</evidence>
<evidence type="ECO:0000269" key="10">
    <source>
    </source>
</evidence>
<evidence type="ECO:0000269" key="11">
    <source>
    </source>
</evidence>
<evidence type="ECO:0000269" key="12">
    <source>
    </source>
</evidence>
<evidence type="ECO:0000303" key="13">
    <source>
    </source>
</evidence>
<evidence type="ECO:0000305" key="14"/>
<evidence type="ECO:0007744" key="15">
    <source>
    </source>
</evidence>
<evidence type="ECO:0007744" key="16">
    <source>
    </source>
</evidence>
<evidence type="ECO:0007744" key="17">
    <source>
    </source>
</evidence>
<evidence type="ECO:0007744" key="18">
    <source>
    </source>
</evidence>
<evidence type="ECO:0007744" key="19">
    <source>
    </source>
</evidence>
<evidence type="ECO:0007744" key="20">
    <source>
    </source>
</evidence>
<evidence type="ECO:0007744" key="21">
    <source>
    </source>
</evidence>
<evidence type="ECO:0007829" key="22">
    <source>
        <dbReference type="PDB" id="6ZOJ"/>
    </source>
</evidence>
<evidence type="ECO:0007829" key="23">
    <source>
        <dbReference type="PDB" id="6ZXE"/>
    </source>
</evidence>
<evidence type="ECO:0007829" key="24">
    <source>
        <dbReference type="PDB" id="7R4X"/>
    </source>
</evidence>
<gene>
    <name type="primary">RPS2</name>
    <name type="synonym">RPS4</name>
</gene>
<name>RS2_HUMAN</name>
<sequence>MADDAGAAGGPGGPGGPGMGNRGGFRGGFGSGIRGRGRGRGRGRGRGRGARGGKAEDKEWMPVTKLGRLVKDMKIKSLEEIYLFSLPIKESEIIDFFLGASLKDEVLKIMPVQKQTRAGQRTRFKAFVAIGDYNGHVGLGVKCSKEVATAIRGAIILAKLSIVPVRRGYWGNKIGKPHTVPCKVTGRCGSVLVRLIPAPRGTGIVSAPVPKKLLMMAGIDDCYTSARGCTATLGNFAKATFDAISKTYSYLTPDLWKETVFTKSPYQEFTDHLVKTHTRVSVQRTQAPAVATT</sequence>
<comment type="function">
    <text evidence="1 6">Component of the ribosome, a large ribonucleoprotein complex responsible for the synthesis of proteins in the cell (PubMed:23636399). The small ribosomal subunit (SSU) binds messenger RNAs (mRNAs) and translates the encoded message by selecting cognate aminoacyl-transfer RNA (tRNA) molecules (PubMed:23636399). The large subunit (LSU) contains the ribosomal catalytic site termed the peptidyl transferase center (PTC), which catalyzes the formation of peptide bonds, thereby polymerizing the amino acids delivered by tRNAs into a polypeptide chain (PubMed:23636399). The nascent polypeptides leave the ribosome through a tunnel in the LSU and interact with protein factors that function in enzymatic processing, targeting, and the membrane insertion of nascent chains at the exit of the ribosomal tunnel (PubMed:23636399). Plays a role in the assembly and function of the 40S ribosomal subunit (By similarity). Mutations in this protein affects the control of translational fidelity (By similarity). Involved in nucleolar processing of pre-18S ribosomal RNA and ribosome assembly (By similarity).</text>
</comment>
<comment type="subunit">
    <text evidence="6 8">Component of the small ribosomal subunit (PubMed:23636399). Interacts with zinc finger protein ZNF277 (via zinc-finger domains); the interaction is direct; the interaction is extra-ribosomal (PubMed:30530495). Interaction with ZNF277 competes with the binding of RPS2 to protein arginine methyltransferase PRMT3 (PubMed:30530495).</text>
</comment>
<comment type="interaction">
    <interactant intactId="EBI-443446">
        <id>P15880</id>
    </interactant>
    <interactant intactId="EBI-5323863">
        <id>Q5S007</id>
        <label>LRRK2</label>
    </interactant>
    <organismsDiffer>false</organismsDiffer>
    <experiments>4</experiments>
</comment>
<comment type="interaction">
    <interactant intactId="EBI-443446">
        <id>P15880</id>
    </interactant>
    <interactant intactId="EBI-876527">
        <id>Q9H0A0</id>
        <label>NAT10</label>
    </interactant>
    <organismsDiffer>false</organismsDiffer>
    <experiments>4</experiments>
</comment>
<comment type="interaction">
    <interactant intactId="EBI-443446">
        <id>P15880</id>
    </interactant>
    <interactant intactId="EBI-359462">
        <id>Q16342</id>
        <label>PDCD2</label>
    </interactant>
    <organismsDiffer>false</organismsDiffer>
    <experiments>3</experiments>
</comment>
<comment type="interaction">
    <interactant intactId="EBI-443446">
        <id>P15880</id>
    </interactant>
    <interactant intactId="EBI-2809009">
        <id>O60678</id>
        <label>PRMT3</label>
    </interactant>
    <organismsDiffer>false</organismsDiffer>
    <experiments>8</experiments>
</comment>
<comment type="interaction">
    <interactant intactId="EBI-443446">
        <id>P15880</id>
    </interactant>
    <interactant intactId="EBI-351206">
        <id>P46781</id>
        <label>RPS9</label>
    </interactant>
    <organismsDiffer>false</organismsDiffer>
    <experiments>2</experiments>
</comment>
<comment type="subcellular location">
    <subcellularLocation>
        <location evidence="6 8">Cytoplasm</location>
    </subcellularLocation>
    <subcellularLocation>
        <location evidence="8">Nucleus</location>
        <location evidence="8">Nucleolus</location>
    </subcellularLocation>
    <text evidence="8">Probably localized to nucleolus and cytoplasm in complex with ZNF277.</text>
</comment>
<comment type="PTM">
    <text evidence="5">Citrullinated by PADI4 in the Arg/Gly-rich region.</text>
</comment>
<comment type="PTM">
    <text evidence="4">Asymmetric arginine dimethylation by PRMT3 occurs at multiple sites in the Arg/Gly-rich region.</text>
</comment>
<comment type="PTM">
    <text evidence="9 11 12">Monoubiquitinated at Lys-54 and Lys-58 by RNF10 when a ribosome has stalled during translation, leading to its degradation by the proteasome (PubMed:34348161, PubMed:34469731). Deubiquitinated at Lys-54 and Lys-58 by USP10, preventing degradation by the proteasome and promoting 40S ribosome subunit recycling following ribosome dissociation (PubMed:31981475).</text>
</comment>
<comment type="similarity">
    <text evidence="14">Belongs to the universal ribosomal protein uS5 family.</text>
</comment>
<comment type="sequence caution" evidence="14">
    <conflict type="frameshift">
        <sequence resource="EMBL-CDS" id="CAA35078"/>
    </conflict>
</comment>
<keyword id="KW-0002">3D-structure</keyword>
<keyword id="KW-0007">Acetylation</keyword>
<keyword id="KW-0164">Citrullination</keyword>
<keyword id="KW-0963">Cytoplasm</keyword>
<keyword id="KW-0903">Direct protein sequencing</keyword>
<keyword id="KW-1017">Isopeptide bond</keyword>
<keyword id="KW-0539">Nucleus</keyword>
<keyword id="KW-0597">Phosphoprotein</keyword>
<keyword id="KW-1267">Proteomics identification</keyword>
<keyword id="KW-1185">Reference proteome</keyword>
<keyword id="KW-0677">Repeat</keyword>
<keyword id="KW-0687">Ribonucleoprotein</keyword>
<keyword id="KW-0689">Ribosomal protein</keyword>
<keyword id="KW-0832">Ubl conjugation</keyword>
<reference key="1">
    <citation type="journal article" date="1990" name="Nucleic Acids Res.">
        <title>Human cDNA sequence homologous to the mouse LLRep3 gene family.</title>
        <authorList>
            <person name="Slynn G."/>
            <person name="Jenner D."/>
            <person name="Potts W."/>
            <person name="Elvin P."/>
            <person name="Morten J.E.N."/>
            <person name="Markham A.F."/>
        </authorList>
    </citation>
    <scope>NUCLEOTIDE SEQUENCE [MRNA]</scope>
    <source>
        <tissue>Colon</tissue>
    </source>
</reference>
<reference key="2">
    <citation type="journal article" date="2004" name="Nat. Genet.">
        <title>Complete sequencing and characterization of 21,243 full-length human cDNAs.</title>
        <authorList>
            <person name="Ota T."/>
            <person name="Suzuki Y."/>
            <person name="Nishikawa T."/>
            <person name="Otsuki T."/>
            <person name="Sugiyama T."/>
            <person name="Irie R."/>
            <person name="Wakamatsu A."/>
            <person name="Hayashi K."/>
            <person name="Sato H."/>
            <person name="Nagai K."/>
            <person name="Kimura K."/>
            <person name="Makita H."/>
            <person name="Sekine M."/>
            <person name="Obayashi M."/>
            <person name="Nishi T."/>
            <person name="Shibahara T."/>
            <person name="Tanaka T."/>
            <person name="Ishii S."/>
            <person name="Yamamoto J."/>
            <person name="Saito K."/>
            <person name="Kawai Y."/>
            <person name="Isono Y."/>
            <person name="Nakamura Y."/>
            <person name="Nagahari K."/>
            <person name="Murakami K."/>
            <person name="Yasuda T."/>
            <person name="Iwayanagi T."/>
            <person name="Wagatsuma M."/>
            <person name="Shiratori A."/>
            <person name="Sudo H."/>
            <person name="Hosoiri T."/>
            <person name="Kaku Y."/>
            <person name="Kodaira H."/>
            <person name="Kondo H."/>
            <person name="Sugawara M."/>
            <person name="Takahashi M."/>
            <person name="Kanda K."/>
            <person name="Yokoi T."/>
            <person name="Furuya T."/>
            <person name="Kikkawa E."/>
            <person name="Omura Y."/>
            <person name="Abe K."/>
            <person name="Kamihara K."/>
            <person name="Katsuta N."/>
            <person name="Sato K."/>
            <person name="Tanikawa M."/>
            <person name="Yamazaki M."/>
            <person name="Ninomiya K."/>
            <person name="Ishibashi T."/>
            <person name="Yamashita H."/>
            <person name="Murakawa K."/>
            <person name="Fujimori K."/>
            <person name="Tanai H."/>
            <person name="Kimata M."/>
            <person name="Watanabe M."/>
            <person name="Hiraoka S."/>
            <person name="Chiba Y."/>
            <person name="Ishida S."/>
            <person name="Ono Y."/>
            <person name="Takiguchi S."/>
            <person name="Watanabe S."/>
            <person name="Yosida M."/>
            <person name="Hotuta T."/>
            <person name="Kusano J."/>
            <person name="Kanehori K."/>
            <person name="Takahashi-Fujii A."/>
            <person name="Hara H."/>
            <person name="Tanase T.-O."/>
            <person name="Nomura Y."/>
            <person name="Togiya S."/>
            <person name="Komai F."/>
            <person name="Hara R."/>
            <person name="Takeuchi K."/>
            <person name="Arita M."/>
            <person name="Imose N."/>
            <person name="Musashino K."/>
            <person name="Yuuki H."/>
            <person name="Oshima A."/>
            <person name="Sasaki N."/>
            <person name="Aotsuka S."/>
            <person name="Yoshikawa Y."/>
            <person name="Matsunawa H."/>
            <person name="Ichihara T."/>
            <person name="Shiohata N."/>
            <person name="Sano S."/>
            <person name="Moriya S."/>
            <person name="Momiyama H."/>
            <person name="Satoh N."/>
            <person name="Takami S."/>
            <person name="Terashima Y."/>
            <person name="Suzuki O."/>
            <person name="Nakagawa S."/>
            <person name="Senoh A."/>
            <person name="Mizoguchi H."/>
            <person name="Goto Y."/>
            <person name="Shimizu F."/>
            <person name="Wakebe H."/>
            <person name="Hishigaki H."/>
            <person name="Watanabe T."/>
            <person name="Sugiyama A."/>
            <person name="Takemoto M."/>
            <person name="Kawakami B."/>
            <person name="Yamazaki M."/>
            <person name="Watanabe K."/>
            <person name="Kumagai A."/>
            <person name="Itakura S."/>
            <person name="Fukuzumi Y."/>
            <person name="Fujimori Y."/>
            <person name="Komiyama M."/>
            <person name="Tashiro H."/>
            <person name="Tanigami A."/>
            <person name="Fujiwara T."/>
            <person name="Ono T."/>
            <person name="Yamada K."/>
            <person name="Fujii Y."/>
            <person name="Ozaki K."/>
            <person name="Hirao M."/>
            <person name="Ohmori Y."/>
            <person name="Kawabata A."/>
            <person name="Hikiji T."/>
            <person name="Kobatake N."/>
            <person name="Inagaki H."/>
            <person name="Ikema Y."/>
            <person name="Okamoto S."/>
            <person name="Okitani R."/>
            <person name="Kawakami T."/>
            <person name="Noguchi S."/>
            <person name="Itoh T."/>
            <person name="Shigeta K."/>
            <person name="Senba T."/>
            <person name="Matsumura K."/>
            <person name="Nakajima Y."/>
            <person name="Mizuno T."/>
            <person name="Morinaga M."/>
            <person name="Sasaki M."/>
            <person name="Togashi T."/>
            <person name="Oyama M."/>
            <person name="Hata H."/>
            <person name="Watanabe M."/>
            <person name="Komatsu T."/>
            <person name="Mizushima-Sugano J."/>
            <person name="Satoh T."/>
            <person name="Shirai Y."/>
            <person name="Takahashi Y."/>
            <person name="Nakagawa K."/>
            <person name="Okumura K."/>
            <person name="Nagase T."/>
            <person name="Nomura N."/>
            <person name="Kikuchi H."/>
            <person name="Masuho Y."/>
            <person name="Yamashita R."/>
            <person name="Nakai K."/>
            <person name="Yada T."/>
            <person name="Nakamura Y."/>
            <person name="Ohara O."/>
            <person name="Isogai T."/>
            <person name="Sugano S."/>
        </authorList>
    </citation>
    <scope>NUCLEOTIDE SEQUENCE [LARGE SCALE MRNA]</scope>
    <source>
        <tissue>Brain</tissue>
    </source>
</reference>
<reference key="3">
    <citation type="submission" date="2005-09" db="EMBL/GenBank/DDBJ databases">
        <authorList>
            <person name="Mural R.J."/>
            <person name="Istrail S."/>
            <person name="Sutton G.G."/>
            <person name="Florea L."/>
            <person name="Halpern A.L."/>
            <person name="Mobarry C.M."/>
            <person name="Lippert R."/>
            <person name="Walenz B."/>
            <person name="Shatkay H."/>
            <person name="Dew I."/>
            <person name="Miller J.R."/>
            <person name="Flanigan M.J."/>
            <person name="Edwards N.J."/>
            <person name="Bolanos R."/>
            <person name="Fasulo D."/>
            <person name="Halldorsson B.V."/>
            <person name="Hannenhalli S."/>
            <person name="Turner R."/>
            <person name="Yooseph S."/>
            <person name="Lu F."/>
            <person name="Nusskern D.R."/>
            <person name="Shue B.C."/>
            <person name="Zheng X.H."/>
            <person name="Zhong F."/>
            <person name="Delcher A.L."/>
            <person name="Huson D.H."/>
            <person name="Kravitz S.A."/>
            <person name="Mouchard L."/>
            <person name="Reinert K."/>
            <person name="Remington K.A."/>
            <person name="Clark A.G."/>
            <person name="Waterman M.S."/>
            <person name="Eichler E.E."/>
            <person name="Adams M.D."/>
            <person name="Hunkapiller M.W."/>
            <person name="Myers E.W."/>
            <person name="Venter J.C."/>
        </authorList>
    </citation>
    <scope>NUCLEOTIDE SEQUENCE [LARGE SCALE GENOMIC DNA]</scope>
</reference>
<reference key="4">
    <citation type="journal article" date="2004" name="Genome Res.">
        <title>The status, quality, and expansion of the NIH full-length cDNA project: the Mammalian Gene Collection (MGC).</title>
        <authorList>
            <consortium name="The MGC Project Team"/>
        </authorList>
    </citation>
    <scope>NUCLEOTIDE SEQUENCE [LARGE SCALE MRNA]</scope>
    <source>
        <tissue>Brain</tissue>
        <tissue>Cervix</tissue>
        <tissue>Colon</tissue>
        <tissue>Eye</tissue>
        <tissue>Kidney</tissue>
        <tissue>Lung</tissue>
        <tissue>Mammary gland</tissue>
        <tissue>Muscle</tissue>
        <tissue>Placenta</tissue>
        <tissue>Skin</tissue>
        <tissue>Testis</tissue>
        <tissue>Uterus</tissue>
    </source>
</reference>
<reference key="5">
    <citation type="journal article" date="1996" name="Eur. J. Biochem.">
        <title>Characterization of the human small-ribosomal-subunit proteins by N-terminal and internal sequencing, and mass spectrometry.</title>
        <authorList>
            <person name="Vladimirov S.N."/>
            <person name="Ivanov A.V."/>
            <person name="Karpova G.G."/>
            <person name="Musolyamov A.K."/>
            <person name="Egorov T.A."/>
            <person name="Thiede B."/>
            <person name="Wittmann-Liebold B."/>
            <person name="Otto A."/>
        </authorList>
    </citation>
    <scope>PROTEIN SEQUENCE OF 276-291</scope>
    <source>
        <tissue>Placenta</tissue>
    </source>
</reference>
<reference key="6">
    <citation type="journal article" date="2003" name="Nature">
        <title>Proteomic characterization of the human centrosome by protein correlation profiling.</title>
        <authorList>
            <person name="Andersen J.S."/>
            <person name="Wilkinson C.J."/>
            <person name="Mayor T."/>
            <person name="Mortensen P."/>
            <person name="Nigg E.A."/>
            <person name="Mann M."/>
        </authorList>
    </citation>
    <scope>IDENTIFICATION BY MASS SPECTROMETRY</scope>
    <source>
        <tissue>Lymphoblast</tissue>
    </source>
</reference>
<reference key="7">
    <citation type="journal article" date="2005" name="Biochem. J.">
        <title>Ribosomal protein S2 is a substrate for mammalian PRMT3 (protein arginine methyltransferase 3).</title>
        <authorList>
            <person name="Swiercz R."/>
            <person name="Person M.D."/>
            <person name="Bedford M.T."/>
        </authorList>
    </citation>
    <scope>METHYLATION BY PRMT3</scope>
</reference>
<reference key="8">
    <citation type="journal article" date="2008" name="Proc. Natl. Acad. Sci. U.S.A.">
        <title>A quantitative atlas of mitotic phosphorylation.</title>
        <authorList>
            <person name="Dephoure N."/>
            <person name="Zhou C."/>
            <person name="Villen J."/>
            <person name="Beausoleil S.A."/>
            <person name="Bakalarski C.E."/>
            <person name="Elledge S.J."/>
            <person name="Gygi S.P."/>
        </authorList>
    </citation>
    <scope>PHOSPHORYLATION [LARGE SCALE ANALYSIS] AT SER-264</scope>
    <scope>IDENTIFICATION BY MASS SPECTROMETRY [LARGE SCALE ANALYSIS]</scope>
    <source>
        <tissue>Cervix carcinoma</tissue>
    </source>
</reference>
<reference key="9">
    <citation type="journal article" date="2009" name="Sci. Signal.">
        <title>Quantitative phosphoproteomic analysis of T cell receptor signaling reveals system-wide modulation of protein-protein interactions.</title>
        <authorList>
            <person name="Mayya V."/>
            <person name="Lundgren D.H."/>
            <person name="Hwang S.-I."/>
            <person name="Rezaul K."/>
            <person name="Wu L."/>
            <person name="Eng J.K."/>
            <person name="Rodionov V."/>
            <person name="Han D.K."/>
        </authorList>
    </citation>
    <scope>IDENTIFICATION BY MASS SPECTROMETRY [LARGE SCALE ANALYSIS]</scope>
    <source>
        <tissue>Leukemic T-cell</tissue>
    </source>
</reference>
<reference key="10">
    <citation type="journal article" date="2009" name="Science">
        <title>Lysine acetylation targets protein complexes and co-regulates major cellular functions.</title>
        <authorList>
            <person name="Choudhary C."/>
            <person name="Kumar C."/>
            <person name="Gnad F."/>
            <person name="Nielsen M.L."/>
            <person name="Rehman M."/>
            <person name="Walther T.C."/>
            <person name="Olsen J.V."/>
            <person name="Mann M."/>
        </authorList>
    </citation>
    <scope>ACETYLATION [LARGE SCALE ANALYSIS] AT LYS-263 AND LYS-275</scope>
    <scope>IDENTIFICATION BY MASS SPECTROMETRY [LARGE SCALE ANALYSIS]</scope>
</reference>
<reference key="11">
    <citation type="journal article" date="2010" name="Sci. Signal.">
        <title>Quantitative phosphoproteomics reveals widespread full phosphorylation site occupancy during mitosis.</title>
        <authorList>
            <person name="Olsen J.V."/>
            <person name="Vermeulen M."/>
            <person name="Santamaria A."/>
            <person name="Kumar C."/>
            <person name="Miller M.L."/>
            <person name="Jensen L.J."/>
            <person name="Gnad F."/>
            <person name="Cox J."/>
            <person name="Jensen T.S."/>
            <person name="Nigg E.A."/>
            <person name="Brunak S."/>
            <person name="Mann M."/>
        </authorList>
    </citation>
    <scope>PHOSPHORYLATION [LARGE SCALE ANALYSIS] AT SER-264 AND SER-281</scope>
    <scope>IDENTIFICATION BY MASS SPECTROMETRY [LARGE SCALE ANALYSIS]</scope>
    <source>
        <tissue>Cervix carcinoma</tissue>
    </source>
</reference>
<reference key="12">
    <citation type="journal article" date="2011" name="BMC Syst. Biol.">
        <title>Initial characterization of the human central proteome.</title>
        <authorList>
            <person name="Burkard T.R."/>
            <person name="Planyavsky M."/>
            <person name="Kaupe I."/>
            <person name="Breitwieser F.P."/>
            <person name="Buerckstuemmer T."/>
            <person name="Bennett K.L."/>
            <person name="Superti-Furga G."/>
            <person name="Colinge J."/>
        </authorList>
    </citation>
    <scope>IDENTIFICATION BY MASS SPECTROMETRY [LARGE SCALE ANALYSIS]</scope>
</reference>
<reference key="13">
    <citation type="journal article" date="2011" name="Mol. Biosyst.">
        <title>Discovery of peptidylarginine deiminase-4 substrates by protein array: antagonistic citrullination and methylation of human ribosomal protein S2.</title>
        <authorList>
            <person name="Guo Q."/>
            <person name="Bedford M.T."/>
            <person name="Fast W."/>
        </authorList>
    </citation>
    <scope>CITRULLINATION</scope>
</reference>
<reference key="14">
    <citation type="journal article" date="2012" name="Proc. Natl. Acad. Sci. U.S.A.">
        <title>N-terminal acetylome analyses and functional insights of the N-terminal acetyltransferase NatB.</title>
        <authorList>
            <person name="Van Damme P."/>
            <person name="Lasa M."/>
            <person name="Polevoda B."/>
            <person name="Gazquez C."/>
            <person name="Elosegui-Artola A."/>
            <person name="Kim D.S."/>
            <person name="De Juan-Pardo E."/>
            <person name="Demeyer K."/>
            <person name="Hole K."/>
            <person name="Larrea E."/>
            <person name="Timmerman E."/>
            <person name="Prieto J."/>
            <person name="Arnesen T."/>
            <person name="Sherman F."/>
            <person name="Gevaert K."/>
            <person name="Aldabe R."/>
        </authorList>
    </citation>
    <scope>ACETYLATION [LARGE SCALE ANALYSIS] AT ALA-2</scope>
    <scope>CLEAVAGE OF INITIATOR METHIONINE [LARGE SCALE ANALYSIS]</scope>
    <scope>IDENTIFICATION BY MASS SPECTROMETRY [LARGE SCALE ANALYSIS]</scope>
</reference>
<reference key="15">
    <citation type="journal article" date="2013" name="J. Proteome Res.">
        <title>Toward a comprehensive characterization of a human cancer cell phosphoproteome.</title>
        <authorList>
            <person name="Zhou H."/>
            <person name="Di Palma S."/>
            <person name="Preisinger C."/>
            <person name="Peng M."/>
            <person name="Polat A.N."/>
            <person name="Heck A.J."/>
            <person name="Mohammed S."/>
        </authorList>
    </citation>
    <scope>PHOSPHORYLATION [LARGE SCALE ANALYSIS] AT THR-252; SER-264 AND THR-270</scope>
    <scope>IDENTIFICATION BY MASS SPECTROMETRY [LARGE SCALE ANALYSIS]</scope>
    <source>
        <tissue>Cervix carcinoma</tissue>
        <tissue>Erythroleukemia</tissue>
    </source>
</reference>
<reference key="16">
    <citation type="journal article" date="2014" name="Curr. Opin. Struct. Biol.">
        <title>A new system for naming ribosomal proteins.</title>
        <authorList>
            <person name="Ban N."/>
            <person name="Beckmann R."/>
            <person name="Cate J.H.D."/>
            <person name="Dinman J.D."/>
            <person name="Dragon F."/>
            <person name="Ellis S.R."/>
            <person name="Lafontaine D.L.J."/>
            <person name="Lindahl L."/>
            <person name="Liljas A."/>
            <person name="Lipton J.M."/>
            <person name="McAlear M.A."/>
            <person name="Moore P.B."/>
            <person name="Noller H.F."/>
            <person name="Ortega J."/>
            <person name="Panse V.G."/>
            <person name="Ramakrishnan V."/>
            <person name="Spahn C.M.T."/>
            <person name="Steitz T.A."/>
            <person name="Tchorzewski M."/>
            <person name="Tollervey D."/>
            <person name="Warren A.J."/>
            <person name="Williamson J.R."/>
            <person name="Wilson D."/>
            <person name="Yonath A."/>
            <person name="Yusupov M."/>
        </authorList>
    </citation>
    <scope>NOMENCLATURE</scope>
</reference>
<reference key="17">
    <citation type="journal article" date="2014" name="J. Proteomics">
        <title>An enzyme assisted RP-RPLC approach for in-depth analysis of human liver phosphoproteome.</title>
        <authorList>
            <person name="Bian Y."/>
            <person name="Song C."/>
            <person name="Cheng K."/>
            <person name="Dong M."/>
            <person name="Wang F."/>
            <person name="Huang J."/>
            <person name="Sun D."/>
            <person name="Wang L."/>
            <person name="Ye M."/>
            <person name="Zou H."/>
        </authorList>
    </citation>
    <scope>IDENTIFICATION BY MASS SPECTROMETRY [LARGE SCALE ANALYSIS]</scope>
    <source>
        <tissue>Liver</tissue>
    </source>
</reference>
<reference key="18">
    <citation type="journal article" date="2014" name="Proc. Natl. Acad. Sci. U.S.A.">
        <title>Mapping of SUMO sites and analysis of SUMOylation changes induced by external stimuli.</title>
        <authorList>
            <person name="Impens F."/>
            <person name="Radoshevich L."/>
            <person name="Cossart P."/>
            <person name="Ribet D."/>
        </authorList>
    </citation>
    <scope>SUMOYLATION [LARGE SCALE ANALYSIS] AT LYS-275</scope>
    <scope>IDENTIFICATION BY MASS SPECTROMETRY [LARGE SCALE ANALYSIS]</scope>
</reference>
<reference key="19">
    <citation type="journal article" date="2015" name="Proteomics">
        <title>N-terminome analysis of the human mitochondrial proteome.</title>
        <authorList>
            <person name="Vaca Jacome A.S."/>
            <person name="Rabilloud T."/>
            <person name="Schaeffer-Reiss C."/>
            <person name="Rompais M."/>
            <person name="Ayoub D."/>
            <person name="Lane L."/>
            <person name="Bairoch A."/>
            <person name="Van Dorsselaer A."/>
            <person name="Carapito C."/>
        </authorList>
    </citation>
    <scope>IDENTIFICATION BY MASS SPECTROMETRY [LARGE SCALE ANALYSIS]</scope>
</reference>
<reference key="20">
    <citation type="journal article" date="2017" name="Mol. Cell">
        <title>ZNF598 and RACK1 regulate mammalian ribosome-associated quality control function by mediating regulatory 40S ribosomal ubiquitylation.</title>
        <authorList>
            <person name="Sundaramoorthy E."/>
            <person name="Leonard M."/>
            <person name="Mak R."/>
            <person name="Liao J."/>
            <person name="Fulzele A."/>
            <person name="Bennett E.J."/>
        </authorList>
    </citation>
    <scope>UBIQUITINATION AT LYS-58 AND LYS-275</scope>
    <scope>MUTAGENESIS OF LYS-58 AND LYS-275</scope>
</reference>
<reference key="21">
    <citation type="journal article" date="2017" name="Nat. Struct. Mol. Biol.">
        <title>Site-specific mapping of the human SUMO proteome reveals co-modification with phosphorylation.</title>
        <authorList>
            <person name="Hendriks I.A."/>
            <person name="Lyon D."/>
            <person name="Young C."/>
            <person name="Jensen L.J."/>
            <person name="Vertegaal A.C."/>
            <person name="Nielsen M.L."/>
        </authorList>
    </citation>
    <scope>SUMOYLATION [LARGE SCALE ANALYSIS] AT LYS-275</scope>
    <scope>IDENTIFICATION BY MASS SPECTROMETRY [LARGE SCALE ANALYSIS]</scope>
</reference>
<reference key="22">
    <citation type="journal article" date="2019" name="J. Biol. Chem.">
        <title>The 40S ribosomal protein uS5 (RPS2) assembles into an extraribosomal complex with human ZNF277 that competes with the PRMT3-uS5 interaction.</title>
        <authorList>
            <person name="Dionne K.L."/>
            <person name="Bergeron D."/>
            <person name="Landry-Voyer A.M."/>
            <person name="Bachand F."/>
        </authorList>
    </citation>
    <scope>INTERACTION WITH ZNF277</scope>
</reference>
<reference key="23">
    <citation type="journal article" date="2020" name="Elife">
        <title>Distinct regulatory ribosomal ubiquitylation events are reversible and hierarchically organized.</title>
        <authorList>
            <person name="Garshott D.M."/>
            <person name="Sundaramoorthy E."/>
            <person name="Leonard M."/>
            <person name="Bennett E.J."/>
        </authorList>
    </citation>
    <scope>UBIQUITINATION AT LYS-54 AND LYS-58</scope>
</reference>
<reference key="24">
    <citation type="journal article" date="2020" name="Mol. Cell">
        <title>The G3BP1-family-USP10 deubiquitinase complex rescues ubiquitinated 40S subunits of ribosomes stalled in translation from lysosomal degradation.</title>
        <authorList>
            <person name="Meyer C."/>
            <person name="Garzia A."/>
            <person name="Morozov P."/>
            <person name="Molina H."/>
            <person name="Tuschl T."/>
        </authorList>
    </citation>
    <scope>UBIQUITINATION</scope>
    <scope>DEUBIQUITINATION BY USP10</scope>
</reference>
<reference key="25">
    <citation type="journal article" date="2021" name="Cell Rep.">
        <title>The E3 ubiquitin ligase RNF10 modifies 40S ribosomal subunits of ribosomes compromised in translation.</title>
        <authorList>
            <person name="Garzia A."/>
            <person name="Meyer C."/>
            <person name="Tuschl T."/>
        </authorList>
    </citation>
    <scope>UBIQUITINATION BY RNF10</scope>
</reference>
<reference key="26">
    <citation type="journal article" date="2021" name="Cell Rep.">
        <title>iRQC, a surveillance pathway for 40S ribosomal quality control during mRNA translation initiation.</title>
        <authorList>
            <person name="Garshott D.M."/>
            <person name="An H."/>
            <person name="Sundaramoorthy E."/>
            <person name="Leonard M."/>
            <person name="Vicary A."/>
            <person name="Harper J.W."/>
            <person name="Bennett E.J."/>
        </authorList>
    </citation>
    <scope>UBIQUITINATION AT LYS-54 AND LYS-58</scope>
    <scope>MUTAGENESIS OF 54-LYS--LYS-58</scope>
</reference>
<reference key="27">
    <citation type="journal article" date="2013" name="Nature">
        <title>Structures of the human and Drosophila 80S ribosome.</title>
        <authorList>
            <person name="Anger A.M."/>
            <person name="Armache J.P."/>
            <person name="Berninghausen O."/>
            <person name="Habeck M."/>
            <person name="Subklewe M."/>
            <person name="Wilson D.N."/>
            <person name="Beckmann R."/>
        </authorList>
    </citation>
    <scope>STRUCTURE BY ELECTRON MICROSCOPY (5.0 ANGSTROMS) OF RIBOSOME</scope>
    <scope>FUNCTION</scope>
    <scope>SUBUNIT</scope>
    <scope>SUBCELLULAR LOCATION</scope>
</reference>
<dbReference type="EMBL" id="X17206">
    <property type="protein sequence ID" value="CAA35078.1"/>
    <property type="status" value="ALT_FRAME"/>
    <property type="molecule type" value="mRNA"/>
</dbReference>
<dbReference type="EMBL" id="AK312173">
    <property type="protein sequence ID" value="BAG35107.1"/>
    <property type="molecule type" value="mRNA"/>
</dbReference>
<dbReference type="EMBL" id="CH471112">
    <property type="protein sequence ID" value="EAW85592.1"/>
    <property type="molecule type" value="Genomic_DNA"/>
</dbReference>
<dbReference type="EMBL" id="CH471112">
    <property type="protein sequence ID" value="EAW85595.1"/>
    <property type="molecule type" value="Genomic_DNA"/>
</dbReference>
<dbReference type="EMBL" id="BC001795">
    <property type="protein sequence ID" value="AAH01795.1"/>
    <property type="molecule type" value="mRNA"/>
</dbReference>
<dbReference type="EMBL" id="BC006559">
    <property type="protein sequence ID" value="AAH06559.1"/>
    <property type="molecule type" value="mRNA"/>
</dbReference>
<dbReference type="EMBL" id="BC008862">
    <property type="protein sequence ID" value="AAH08862.1"/>
    <property type="molecule type" value="mRNA"/>
</dbReference>
<dbReference type="EMBL" id="BC010165">
    <property type="protein sequence ID" value="AAH10165.1"/>
    <property type="molecule type" value="mRNA"/>
</dbReference>
<dbReference type="EMBL" id="BC012354">
    <property type="protein sequence ID" value="AAH12354.1"/>
    <property type="molecule type" value="mRNA"/>
</dbReference>
<dbReference type="EMBL" id="BC016178">
    <property type="protein sequence ID" value="AAH16178.1"/>
    <property type="molecule type" value="mRNA"/>
</dbReference>
<dbReference type="EMBL" id="BC016951">
    <property type="protein sequence ID" value="AAH16951.1"/>
    <property type="molecule type" value="mRNA"/>
</dbReference>
<dbReference type="EMBL" id="BC018993">
    <property type="protein sequence ID" value="AAH18993.1"/>
    <property type="molecule type" value="mRNA"/>
</dbReference>
<dbReference type="EMBL" id="BC021545">
    <property type="protein sequence ID" value="AAH21545.1"/>
    <property type="molecule type" value="mRNA"/>
</dbReference>
<dbReference type="EMBL" id="BC023541">
    <property type="protein sequence ID" value="AAH23541.1"/>
    <property type="molecule type" value="mRNA"/>
</dbReference>
<dbReference type="EMBL" id="BC025677">
    <property type="protein sequence ID" value="AAH25677.1"/>
    <property type="molecule type" value="mRNA"/>
</dbReference>
<dbReference type="EMBL" id="BC066321">
    <property type="protein sequence ID" value="AAH66321.1"/>
    <property type="molecule type" value="mRNA"/>
</dbReference>
<dbReference type="EMBL" id="BC068051">
    <property type="protein sequence ID" value="AAH68051.1"/>
    <property type="molecule type" value="mRNA"/>
</dbReference>
<dbReference type="EMBL" id="BC071922">
    <property type="protein sequence ID" value="AAH71922.1"/>
    <property type="molecule type" value="mRNA"/>
</dbReference>
<dbReference type="EMBL" id="BC071923">
    <property type="protein sequence ID" value="AAH71923.1"/>
    <property type="molecule type" value="mRNA"/>
</dbReference>
<dbReference type="EMBL" id="BC071924">
    <property type="protein sequence ID" value="AAH71924.1"/>
    <property type="molecule type" value="mRNA"/>
</dbReference>
<dbReference type="EMBL" id="BC073966">
    <property type="protein sequence ID" value="AAH73966.1"/>
    <property type="molecule type" value="mRNA"/>
</dbReference>
<dbReference type="EMBL" id="BC075830">
    <property type="protein sequence ID" value="AAH75830.1"/>
    <property type="molecule type" value="mRNA"/>
</dbReference>
<dbReference type="EMBL" id="BC103756">
    <property type="protein sequence ID" value="AAI03757.1"/>
    <property type="molecule type" value="mRNA"/>
</dbReference>
<dbReference type="EMBL" id="BC105985">
    <property type="protein sequence ID" value="AAI05986.1"/>
    <property type="molecule type" value="mRNA"/>
</dbReference>
<dbReference type="CCDS" id="CCDS10452.1"/>
<dbReference type="PIR" id="S08228">
    <property type="entry name" value="S08228"/>
</dbReference>
<dbReference type="RefSeq" id="NP_002943.2">
    <property type="nucleotide sequence ID" value="NM_002952.3"/>
</dbReference>
<dbReference type="PDB" id="4UG0">
    <property type="method" value="EM"/>
    <property type="chains" value="SC=1-293"/>
</dbReference>
<dbReference type="PDB" id="4V6X">
    <property type="method" value="EM"/>
    <property type="resolution" value="5.00 A"/>
    <property type="chains" value="AC=1-293"/>
</dbReference>
<dbReference type="PDB" id="5A2Q">
    <property type="method" value="EM"/>
    <property type="resolution" value="3.90 A"/>
    <property type="chains" value="C=1-293"/>
</dbReference>
<dbReference type="PDB" id="5AJ0">
    <property type="method" value="EM"/>
    <property type="resolution" value="3.50 A"/>
    <property type="chains" value="BC=1-293"/>
</dbReference>
<dbReference type="PDB" id="5FLX">
    <property type="method" value="EM"/>
    <property type="resolution" value="3.90 A"/>
    <property type="chains" value="C=1-293"/>
</dbReference>
<dbReference type="PDB" id="5LKS">
    <property type="method" value="EM"/>
    <property type="resolution" value="3.60 A"/>
    <property type="chains" value="SC=1-293"/>
</dbReference>
<dbReference type="PDB" id="5OA3">
    <property type="method" value="EM"/>
    <property type="resolution" value="4.30 A"/>
    <property type="chains" value="C=1-293"/>
</dbReference>
<dbReference type="PDB" id="5T2C">
    <property type="method" value="EM"/>
    <property type="resolution" value="3.60 A"/>
    <property type="chains" value="AJ=1-293"/>
</dbReference>
<dbReference type="PDB" id="5VYC">
    <property type="method" value="X-ray"/>
    <property type="resolution" value="6.00 A"/>
    <property type="chains" value="C1/C2/C3/C4/C5/C6=1-293"/>
</dbReference>
<dbReference type="PDB" id="6G18">
    <property type="method" value="EM"/>
    <property type="resolution" value="3.60 A"/>
    <property type="chains" value="C=1-293"/>
</dbReference>
<dbReference type="PDB" id="6G4S">
    <property type="method" value="EM"/>
    <property type="resolution" value="4.00 A"/>
    <property type="chains" value="C=1-293"/>
</dbReference>
<dbReference type="PDB" id="6G51">
    <property type="method" value="EM"/>
    <property type="resolution" value="4.10 A"/>
    <property type="chains" value="C=1-293"/>
</dbReference>
<dbReference type="PDB" id="6G53">
    <property type="method" value="EM"/>
    <property type="resolution" value="4.50 A"/>
    <property type="chains" value="C=1-293"/>
</dbReference>
<dbReference type="PDB" id="6G5H">
    <property type="method" value="EM"/>
    <property type="resolution" value="3.60 A"/>
    <property type="chains" value="C=1-293"/>
</dbReference>
<dbReference type="PDB" id="6G5I">
    <property type="method" value="EM"/>
    <property type="resolution" value="3.50 A"/>
    <property type="chains" value="C=1-293"/>
</dbReference>
<dbReference type="PDB" id="6IP5">
    <property type="method" value="EM"/>
    <property type="resolution" value="3.90 A"/>
    <property type="chains" value="3G=1-293"/>
</dbReference>
<dbReference type="PDB" id="6IP6">
    <property type="method" value="EM"/>
    <property type="resolution" value="4.50 A"/>
    <property type="chains" value="3G=1-293"/>
</dbReference>
<dbReference type="PDB" id="6IP8">
    <property type="method" value="EM"/>
    <property type="resolution" value="3.90 A"/>
    <property type="chains" value="3G=1-293"/>
</dbReference>
<dbReference type="PDB" id="6OLE">
    <property type="method" value="EM"/>
    <property type="resolution" value="3.10 A"/>
    <property type="chains" value="SC=59-278"/>
</dbReference>
<dbReference type="PDB" id="6OLF">
    <property type="method" value="EM"/>
    <property type="resolution" value="3.90 A"/>
    <property type="chains" value="SC=59-278"/>
</dbReference>
<dbReference type="PDB" id="6OLG">
    <property type="method" value="EM"/>
    <property type="resolution" value="3.40 A"/>
    <property type="chains" value="BC=57-278"/>
</dbReference>
<dbReference type="PDB" id="6OLI">
    <property type="method" value="EM"/>
    <property type="resolution" value="3.50 A"/>
    <property type="chains" value="SC=59-278"/>
</dbReference>
<dbReference type="PDB" id="6OLZ">
    <property type="method" value="EM"/>
    <property type="resolution" value="3.90 A"/>
    <property type="chains" value="BC=57-278"/>
</dbReference>
<dbReference type="PDB" id="6OM0">
    <property type="method" value="EM"/>
    <property type="resolution" value="3.10 A"/>
    <property type="chains" value="SC=59-278"/>
</dbReference>
<dbReference type="PDB" id="6OM7">
    <property type="method" value="EM"/>
    <property type="resolution" value="3.70 A"/>
    <property type="chains" value="SC=59-278"/>
</dbReference>
<dbReference type="PDB" id="6QZP">
    <property type="method" value="EM"/>
    <property type="resolution" value="2.90 A"/>
    <property type="chains" value="SC=59-280"/>
</dbReference>
<dbReference type="PDB" id="6XA1">
    <property type="method" value="EM"/>
    <property type="resolution" value="2.80 A"/>
    <property type="chains" value="SC=59-278"/>
</dbReference>
<dbReference type="PDB" id="6Y0G">
    <property type="method" value="EM"/>
    <property type="resolution" value="3.20 A"/>
    <property type="chains" value="SC=1-293"/>
</dbReference>
<dbReference type="PDB" id="6Y2L">
    <property type="method" value="EM"/>
    <property type="resolution" value="3.00 A"/>
    <property type="chains" value="SC=1-293"/>
</dbReference>
<dbReference type="PDB" id="6Y57">
    <property type="method" value="EM"/>
    <property type="resolution" value="3.50 A"/>
    <property type="chains" value="SC=1-293"/>
</dbReference>
<dbReference type="PDB" id="6YBD">
    <property type="method" value="EM"/>
    <property type="resolution" value="3.30 A"/>
    <property type="chains" value="L=1-293"/>
</dbReference>
<dbReference type="PDB" id="6YBW">
    <property type="method" value="EM"/>
    <property type="resolution" value="3.10 A"/>
    <property type="chains" value="L=1-293"/>
</dbReference>
<dbReference type="PDB" id="6Z6L">
    <property type="method" value="EM"/>
    <property type="resolution" value="3.00 A"/>
    <property type="chains" value="SC=1-293"/>
</dbReference>
<dbReference type="PDB" id="6Z6M">
    <property type="method" value="EM"/>
    <property type="resolution" value="3.10 A"/>
    <property type="chains" value="SC=1-293"/>
</dbReference>
<dbReference type="PDB" id="6Z6N">
    <property type="method" value="EM"/>
    <property type="resolution" value="2.90 A"/>
    <property type="chains" value="SC=1-293"/>
</dbReference>
<dbReference type="PDB" id="6ZLW">
    <property type="method" value="EM"/>
    <property type="resolution" value="2.60 A"/>
    <property type="chains" value="D=1-293"/>
</dbReference>
<dbReference type="PDB" id="6ZM7">
    <property type="method" value="EM"/>
    <property type="resolution" value="2.70 A"/>
    <property type="chains" value="SC=1-293"/>
</dbReference>
<dbReference type="PDB" id="6ZME">
    <property type="method" value="EM"/>
    <property type="resolution" value="3.00 A"/>
    <property type="chains" value="SC=1-293"/>
</dbReference>
<dbReference type="PDB" id="6ZMI">
    <property type="method" value="EM"/>
    <property type="resolution" value="2.60 A"/>
    <property type="chains" value="SC=1-293"/>
</dbReference>
<dbReference type="PDB" id="6ZMO">
    <property type="method" value="EM"/>
    <property type="resolution" value="3.10 A"/>
    <property type="chains" value="SC=1-293"/>
</dbReference>
<dbReference type="PDB" id="6ZMT">
    <property type="method" value="EM"/>
    <property type="resolution" value="3.00 A"/>
    <property type="chains" value="D=1-293"/>
</dbReference>
<dbReference type="PDB" id="6ZMW">
    <property type="method" value="EM"/>
    <property type="resolution" value="3.70 A"/>
    <property type="chains" value="L=1-293"/>
</dbReference>
<dbReference type="PDB" id="6ZN5">
    <property type="method" value="EM"/>
    <property type="resolution" value="3.20 A"/>
    <property type="chains" value="D=59-276"/>
</dbReference>
<dbReference type="PDB" id="6ZOJ">
    <property type="method" value="EM"/>
    <property type="resolution" value="2.80 A"/>
    <property type="chains" value="C=1-293"/>
</dbReference>
<dbReference type="PDB" id="6ZOK">
    <property type="method" value="EM"/>
    <property type="resolution" value="2.80 A"/>
    <property type="chains" value="C=1-293"/>
</dbReference>
<dbReference type="PDB" id="6ZON">
    <property type="method" value="EM"/>
    <property type="resolution" value="3.00 A"/>
    <property type="chains" value="d=1-293"/>
</dbReference>
<dbReference type="PDB" id="6ZP4">
    <property type="method" value="EM"/>
    <property type="resolution" value="2.90 A"/>
    <property type="chains" value="d=1-293"/>
</dbReference>
<dbReference type="PDB" id="6ZUO">
    <property type="method" value="EM"/>
    <property type="resolution" value="3.10 A"/>
    <property type="chains" value="C=1-293"/>
</dbReference>
<dbReference type="PDB" id="6ZV6">
    <property type="method" value="EM"/>
    <property type="resolution" value="2.90 A"/>
    <property type="chains" value="C=1-293"/>
</dbReference>
<dbReference type="PDB" id="6ZVH">
    <property type="method" value="EM"/>
    <property type="resolution" value="2.90 A"/>
    <property type="chains" value="C=59-280"/>
</dbReference>
<dbReference type="PDB" id="6ZVJ">
    <property type="method" value="EM"/>
    <property type="resolution" value="3.80 A"/>
    <property type="chains" value="d=60-275"/>
</dbReference>
<dbReference type="PDB" id="6ZXD">
    <property type="method" value="EM"/>
    <property type="resolution" value="3.20 A"/>
    <property type="chains" value="C=1-293"/>
</dbReference>
<dbReference type="PDB" id="6ZXE">
    <property type="method" value="EM"/>
    <property type="resolution" value="3.00 A"/>
    <property type="chains" value="C=1-293"/>
</dbReference>
<dbReference type="PDB" id="6ZXF">
    <property type="method" value="EM"/>
    <property type="resolution" value="3.70 A"/>
    <property type="chains" value="C=1-293"/>
</dbReference>
<dbReference type="PDB" id="6ZXG">
    <property type="method" value="EM"/>
    <property type="resolution" value="2.60 A"/>
    <property type="chains" value="C=1-293"/>
</dbReference>
<dbReference type="PDB" id="6ZXH">
    <property type="method" value="EM"/>
    <property type="resolution" value="2.70 A"/>
    <property type="chains" value="C=1-293"/>
</dbReference>
<dbReference type="PDB" id="7A09">
    <property type="method" value="EM"/>
    <property type="resolution" value="3.50 A"/>
    <property type="chains" value="d=1-293"/>
</dbReference>
<dbReference type="PDB" id="7JQB">
    <property type="method" value="EM"/>
    <property type="resolution" value="2.70 A"/>
    <property type="chains" value="D=1-293"/>
</dbReference>
<dbReference type="PDB" id="7JQC">
    <property type="method" value="EM"/>
    <property type="resolution" value="3.30 A"/>
    <property type="chains" value="D=1-293"/>
</dbReference>
<dbReference type="PDB" id="7K5I">
    <property type="method" value="EM"/>
    <property type="resolution" value="2.90 A"/>
    <property type="chains" value="C=1-293"/>
</dbReference>
<dbReference type="PDB" id="7QP6">
    <property type="method" value="EM"/>
    <property type="resolution" value="4.70 A"/>
    <property type="chains" value="L=1-293"/>
</dbReference>
<dbReference type="PDB" id="7QP7">
    <property type="method" value="EM"/>
    <property type="resolution" value="3.70 A"/>
    <property type="chains" value="L=1-293"/>
</dbReference>
<dbReference type="PDB" id="7QVP">
    <property type="method" value="EM"/>
    <property type="resolution" value="3.00 A"/>
    <property type="chains" value="RC/SC=1-293"/>
</dbReference>
<dbReference type="PDB" id="7R4X">
    <property type="method" value="EM"/>
    <property type="resolution" value="2.15 A"/>
    <property type="chains" value="C=1-293"/>
</dbReference>
<dbReference type="PDB" id="7TQL">
    <property type="method" value="EM"/>
    <property type="resolution" value="3.40 A"/>
    <property type="chains" value="D=59-276"/>
</dbReference>
<dbReference type="PDB" id="7WTV">
    <property type="method" value="EM"/>
    <property type="resolution" value="3.50 A"/>
    <property type="chains" value="C=1-293"/>
</dbReference>
<dbReference type="PDB" id="7WTW">
    <property type="method" value="EM"/>
    <property type="resolution" value="3.20 A"/>
    <property type="chains" value="C=1-293"/>
</dbReference>
<dbReference type="PDB" id="7WTX">
    <property type="method" value="EM"/>
    <property type="resolution" value="3.10 A"/>
    <property type="chains" value="C=1-293"/>
</dbReference>
<dbReference type="PDB" id="7WTZ">
    <property type="method" value="EM"/>
    <property type="resolution" value="3.00 A"/>
    <property type="chains" value="C=1-293"/>
</dbReference>
<dbReference type="PDB" id="7WU0">
    <property type="method" value="EM"/>
    <property type="resolution" value="3.30 A"/>
    <property type="chains" value="C=1-293"/>
</dbReference>
<dbReference type="PDB" id="7XNX">
    <property type="method" value="EM"/>
    <property type="resolution" value="2.70 A"/>
    <property type="chains" value="SC=1-293"/>
</dbReference>
<dbReference type="PDB" id="7XNY">
    <property type="method" value="EM"/>
    <property type="resolution" value="2.50 A"/>
    <property type="chains" value="SC=1-293"/>
</dbReference>
<dbReference type="PDB" id="8G5Y">
    <property type="method" value="EM"/>
    <property type="resolution" value="2.29 A"/>
    <property type="chains" value="SC=1-293"/>
</dbReference>
<dbReference type="PDB" id="8G5Z">
    <property type="method" value="EM"/>
    <property type="resolution" value="2.64 A"/>
    <property type="chains" value="SC=59-280"/>
</dbReference>
<dbReference type="PDB" id="8G60">
    <property type="method" value="EM"/>
    <property type="resolution" value="2.54 A"/>
    <property type="chains" value="SC=1-293"/>
</dbReference>
<dbReference type="PDB" id="8G61">
    <property type="method" value="EM"/>
    <property type="resolution" value="2.94 A"/>
    <property type="chains" value="SC=1-293"/>
</dbReference>
<dbReference type="PDB" id="8G6J">
    <property type="method" value="EM"/>
    <property type="resolution" value="2.80 A"/>
    <property type="chains" value="SC=1-293"/>
</dbReference>
<dbReference type="PDB" id="8GLP">
    <property type="method" value="EM"/>
    <property type="resolution" value="1.67 A"/>
    <property type="chains" value="SC=1-293"/>
</dbReference>
<dbReference type="PDB" id="8IFD">
    <property type="method" value="EM"/>
    <property type="resolution" value="2.59 A"/>
    <property type="chains" value="3G=1-293"/>
</dbReference>
<dbReference type="PDB" id="8IFE">
    <property type="method" value="EM"/>
    <property type="resolution" value="2.57 A"/>
    <property type="chains" value="3G=1-293"/>
</dbReference>
<dbReference type="PDB" id="8JDJ">
    <property type="method" value="EM"/>
    <property type="resolution" value="2.50 A"/>
    <property type="chains" value="z=1-293"/>
</dbReference>
<dbReference type="PDB" id="8JDK">
    <property type="method" value="EM"/>
    <property type="resolution" value="2.26 A"/>
    <property type="chains" value="z=1-293"/>
</dbReference>
<dbReference type="PDB" id="8JDL">
    <property type="method" value="EM"/>
    <property type="resolution" value="2.42 A"/>
    <property type="chains" value="z=1-293"/>
</dbReference>
<dbReference type="PDB" id="8JDM">
    <property type="method" value="EM"/>
    <property type="resolution" value="2.67 A"/>
    <property type="chains" value="z=1-293"/>
</dbReference>
<dbReference type="PDB" id="8K2C">
    <property type="method" value="EM"/>
    <property type="resolution" value="2.40 A"/>
    <property type="chains" value="SC=1-293"/>
</dbReference>
<dbReference type="PDB" id="8OZ0">
    <property type="method" value="EM"/>
    <property type="resolution" value="3.50 A"/>
    <property type="chains" value="O=1-293"/>
</dbReference>
<dbReference type="PDB" id="8PJ1">
    <property type="method" value="EM"/>
    <property type="resolution" value="3.40 A"/>
    <property type="chains" value="L=1-293"/>
</dbReference>
<dbReference type="PDB" id="8PJ2">
    <property type="method" value="EM"/>
    <property type="resolution" value="3.40 A"/>
    <property type="chains" value="L=1-293"/>
</dbReference>
<dbReference type="PDB" id="8PJ3">
    <property type="method" value="EM"/>
    <property type="resolution" value="3.70 A"/>
    <property type="chains" value="L=1-293"/>
</dbReference>
<dbReference type="PDB" id="8PJ4">
    <property type="method" value="EM"/>
    <property type="resolution" value="3.20 A"/>
    <property type="chains" value="L=1-293"/>
</dbReference>
<dbReference type="PDB" id="8PJ5">
    <property type="method" value="EM"/>
    <property type="resolution" value="2.90 A"/>
    <property type="chains" value="L=1-293"/>
</dbReference>
<dbReference type="PDB" id="8PJ6">
    <property type="method" value="EM"/>
    <property type="resolution" value="2.90 A"/>
    <property type="chains" value="L=1-293"/>
</dbReference>
<dbReference type="PDB" id="8PPK">
    <property type="method" value="EM"/>
    <property type="resolution" value="2.98 A"/>
    <property type="chains" value="C=1-293"/>
</dbReference>
<dbReference type="PDB" id="8PPL">
    <property type="method" value="EM"/>
    <property type="resolution" value="2.65 A"/>
    <property type="chains" value="AC=1-293"/>
</dbReference>
<dbReference type="PDB" id="8QOI">
    <property type="method" value="EM"/>
    <property type="resolution" value="1.90 A"/>
    <property type="chains" value="SC=1-293"/>
</dbReference>
<dbReference type="PDB" id="8T4S">
    <property type="method" value="EM"/>
    <property type="resolution" value="2.60 A"/>
    <property type="chains" value="C=1-293"/>
</dbReference>
<dbReference type="PDB" id="8UKB">
    <property type="method" value="EM"/>
    <property type="resolution" value="3.05 A"/>
    <property type="chains" value="SC=59-280"/>
</dbReference>
<dbReference type="PDB" id="8XP2">
    <property type="method" value="EM"/>
    <property type="resolution" value="3.20 A"/>
    <property type="chains" value="SC=1-293"/>
</dbReference>
<dbReference type="PDB" id="8XP3">
    <property type="method" value="EM"/>
    <property type="resolution" value="3.40 A"/>
    <property type="chains" value="SC=1-293"/>
</dbReference>
<dbReference type="PDB" id="8XSX">
    <property type="method" value="EM"/>
    <property type="resolution" value="2.40 A"/>
    <property type="chains" value="SC=1-293"/>
</dbReference>
<dbReference type="PDB" id="8XSY">
    <property type="method" value="EM"/>
    <property type="resolution" value="3.00 A"/>
    <property type="chains" value="SC=1-293"/>
</dbReference>
<dbReference type="PDB" id="8XSZ">
    <property type="method" value="EM"/>
    <property type="resolution" value="3.20 A"/>
    <property type="chains" value="SC=1-293"/>
</dbReference>
<dbReference type="PDB" id="8XXL">
    <property type="method" value="EM"/>
    <property type="resolution" value="2.90 A"/>
    <property type="chains" value="SC=1-293"/>
</dbReference>
<dbReference type="PDB" id="8XXM">
    <property type="method" value="EM"/>
    <property type="resolution" value="3.20 A"/>
    <property type="chains" value="SC=1-293"/>
</dbReference>
<dbReference type="PDB" id="8XXN">
    <property type="method" value="EM"/>
    <property type="resolution" value="3.60 A"/>
    <property type="chains" value="SC=1-293"/>
</dbReference>
<dbReference type="PDB" id="8Y0W">
    <property type="method" value="EM"/>
    <property type="resolution" value="3.40 A"/>
    <property type="chains" value="SC=1-293"/>
</dbReference>
<dbReference type="PDB" id="8Y0X">
    <property type="method" value="EM"/>
    <property type="resolution" value="3.30 A"/>
    <property type="chains" value="SC=1-293"/>
</dbReference>
<dbReference type="PDB" id="8YOO">
    <property type="method" value="EM"/>
    <property type="resolution" value="2.00 A"/>
    <property type="chains" value="SC=1-293"/>
</dbReference>
<dbReference type="PDB" id="8YOP">
    <property type="method" value="EM"/>
    <property type="resolution" value="2.20 A"/>
    <property type="chains" value="SC=1-293"/>
</dbReference>
<dbReference type="PDB" id="8ZDB">
    <property type="method" value="EM"/>
    <property type="resolution" value="3.60 A"/>
    <property type="chains" value="C=1-293"/>
</dbReference>
<dbReference type="PDB" id="8ZDC">
    <property type="method" value="EM"/>
    <property type="resolution" value="3.80 A"/>
    <property type="chains" value="C=1-293"/>
</dbReference>
<dbReference type="PDB" id="8ZDD">
    <property type="method" value="EM"/>
    <property type="resolution" value="3.70 A"/>
    <property type="chains" value="C=1-293"/>
</dbReference>
<dbReference type="PDB" id="9BKD">
    <property type="method" value="EM"/>
    <property type="resolution" value="2.60 A"/>
    <property type="chains" value="L=1-293"/>
</dbReference>
<dbReference type="PDB" id="9BLN">
    <property type="method" value="EM"/>
    <property type="resolution" value="3.90 A"/>
    <property type="chains" value="L=1-293"/>
</dbReference>
<dbReference type="PDB" id="9C3H">
    <property type="method" value="EM"/>
    <property type="resolution" value="2.00 A"/>
    <property type="chains" value="SC=1-293"/>
</dbReference>
<dbReference type="PDB" id="9G8M">
    <property type="method" value="EM"/>
    <property type="resolution" value="3.30 A"/>
    <property type="chains" value="SC=1-293"/>
</dbReference>
<dbReference type="PDB" id="9G8O">
    <property type="method" value="EM"/>
    <property type="resolution" value="3.40 A"/>
    <property type="chains" value="SC=1-293"/>
</dbReference>
<dbReference type="PDBsum" id="4UG0"/>
<dbReference type="PDBsum" id="4V6X"/>
<dbReference type="PDBsum" id="5A2Q"/>
<dbReference type="PDBsum" id="5AJ0"/>
<dbReference type="PDBsum" id="5FLX"/>
<dbReference type="PDBsum" id="5LKS"/>
<dbReference type="PDBsum" id="5OA3"/>
<dbReference type="PDBsum" id="5T2C"/>
<dbReference type="PDBsum" id="5VYC"/>
<dbReference type="PDBsum" id="6G18"/>
<dbReference type="PDBsum" id="6G4S"/>
<dbReference type="PDBsum" id="6G51"/>
<dbReference type="PDBsum" id="6G53"/>
<dbReference type="PDBsum" id="6G5H"/>
<dbReference type="PDBsum" id="6G5I"/>
<dbReference type="PDBsum" id="6IP5"/>
<dbReference type="PDBsum" id="6IP6"/>
<dbReference type="PDBsum" id="6IP8"/>
<dbReference type="PDBsum" id="6OLE"/>
<dbReference type="PDBsum" id="6OLF"/>
<dbReference type="PDBsum" id="6OLG"/>
<dbReference type="PDBsum" id="6OLI"/>
<dbReference type="PDBsum" id="6OLZ"/>
<dbReference type="PDBsum" id="6OM0"/>
<dbReference type="PDBsum" id="6OM7"/>
<dbReference type="PDBsum" id="6QZP"/>
<dbReference type="PDBsum" id="6XA1"/>
<dbReference type="PDBsum" id="6Y0G"/>
<dbReference type="PDBsum" id="6Y2L"/>
<dbReference type="PDBsum" id="6Y57"/>
<dbReference type="PDBsum" id="6YBD"/>
<dbReference type="PDBsum" id="6YBW"/>
<dbReference type="PDBsum" id="6Z6L"/>
<dbReference type="PDBsum" id="6Z6M"/>
<dbReference type="PDBsum" id="6Z6N"/>
<dbReference type="PDBsum" id="6ZLW"/>
<dbReference type="PDBsum" id="6ZM7"/>
<dbReference type="PDBsum" id="6ZME"/>
<dbReference type="PDBsum" id="6ZMI"/>
<dbReference type="PDBsum" id="6ZMO"/>
<dbReference type="PDBsum" id="6ZMT"/>
<dbReference type="PDBsum" id="6ZMW"/>
<dbReference type="PDBsum" id="6ZN5"/>
<dbReference type="PDBsum" id="6ZOJ"/>
<dbReference type="PDBsum" id="6ZOK"/>
<dbReference type="PDBsum" id="6ZON"/>
<dbReference type="PDBsum" id="6ZP4"/>
<dbReference type="PDBsum" id="6ZUO"/>
<dbReference type="PDBsum" id="6ZV6"/>
<dbReference type="PDBsum" id="6ZVH"/>
<dbReference type="PDBsum" id="6ZVJ"/>
<dbReference type="PDBsum" id="6ZXD"/>
<dbReference type="PDBsum" id="6ZXE"/>
<dbReference type="PDBsum" id="6ZXF"/>
<dbReference type="PDBsum" id="6ZXG"/>
<dbReference type="PDBsum" id="6ZXH"/>
<dbReference type="PDBsum" id="7A09"/>
<dbReference type="PDBsum" id="7JQB"/>
<dbReference type="PDBsum" id="7JQC"/>
<dbReference type="PDBsum" id="7K5I"/>
<dbReference type="PDBsum" id="7QP6"/>
<dbReference type="PDBsum" id="7QP7"/>
<dbReference type="PDBsum" id="7QVP"/>
<dbReference type="PDBsum" id="7R4X"/>
<dbReference type="PDBsum" id="7TQL"/>
<dbReference type="PDBsum" id="7WTV"/>
<dbReference type="PDBsum" id="7WTW"/>
<dbReference type="PDBsum" id="7WTX"/>
<dbReference type="PDBsum" id="7WTZ"/>
<dbReference type="PDBsum" id="7WU0"/>
<dbReference type="PDBsum" id="7XNX"/>
<dbReference type="PDBsum" id="7XNY"/>
<dbReference type="PDBsum" id="8G5Y"/>
<dbReference type="PDBsum" id="8G5Z"/>
<dbReference type="PDBsum" id="8G60"/>
<dbReference type="PDBsum" id="8G61"/>
<dbReference type="PDBsum" id="8G6J"/>
<dbReference type="PDBsum" id="8GLP"/>
<dbReference type="PDBsum" id="8IFD"/>
<dbReference type="PDBsum" id="8IFE"/>
<dbReference type="PDBsum" id="8JDJ"/>
<dbReference type="PDBsum" id="8JDK"/>
<dbReference type="PDBsum" id="8JDL"/>
<dbReference type="PDBsum" id="8JDM"/>
<dbReference type="PDBsum" id="8K2C"/>
<dbReference type="PDBsum" id="8OZ0"/>
<dbReference type="PDBsum" id="8PJ1"/>
<dbReference type="PDBsum" id="8PJ2"/>
<dbReference type="PDBsum" id="8PJ3"/>
<dbReference type="PDBsum" id="8PJ4"/>
<dbReference type="PDBsum" id="8PJ5"/>
<dbReference type="PDBsum" id="8PJ6"/>
<dbReference type="PDBsum" id="8PPK"/>
<dbReference type="PDBsum" id="8PPL"/>
<dbReference type="PDBsum" id="8QOI"/>
<dbReference type="PDBsum" id="8T4S"/>
<dbReference type="PDBsum" id="8UKB"/>
<dbReference type="PDBsum" id="8XP2"/>
<dbReference type="PDBsum" id="8XP3"/>
<dbReference type="PDBsum" id="8XSX"/>
<dbReference type="PDBsum" id="8XSY"/>
<dbReference type="PDBsum" id="8XSZ"/>
<dbReference type="PDBsum" id="8XXL"/>
<dbReference type="PDBsum" id="8XXM"/>
<dbReference type="PDBsum" id="8XXN"/>
<dbReference type="PDBsum" id="8Y0W"/>
<dbReference type="PDBsum" id="8Y0X"/>
<dbReference type="PDBsum" id="8YOO"/>
<dbReference type="PDBsum" id="8YOP"/>
<dbReference type="PDBsum" id="8ZDB"/>
<dbReference type="PDBsum" id="8ZDC"/>
<dbReference type="PDBsum" id="8ZDD"/>
<dbReference type="PDBsum" id="9BKD"/>
<dbReference type="PDBsum" id="9BLN"/>
<dbReference type="PDBsum" id="9C3H"/>
<dbReference type="PDBsum" id="9G8M"/>
<dbReference type="PDBsum" id="9G8O"/>
<dbReference type="EMDB" id="EMD-10668"/>
<dbReference type="EMDB" id="EMD-10674"/>
<dbReference type="EMDB" id="EMD-10690"/>
<dbReference type="EMDB" id="EMD-10769"/>
<dbReference type="EMDB" id="EMD-10775"/>
<dbReference type="EMDB" id="EMD-11098"/>
<dbReference type="EMDB" id="EMD-11099"/>
<dbReference type="EMDB" id="EMD-11100"/>
<dbReference type="EMDB" id="EMD-11276"/>
<dbReference type="EMDB" id="EMD-11288"/>
<dbReference type="EMDB" id="EMD-11289"/>
<dbReference type="EMDB" id="EMD-11292"/>
<dbReference type="EMDB" id="EMD-11299"/>
<dbReference type="EMDB" id="EMD-11301"/>
<dbReference type="EMDB" id="EMD-11302"/>
<dbReference type="EMDB" id="EMD-11310"/>
<dbReference type="EMDB" id="EMD-11320"/>
<dbReference type="EMDB" id="EMD-11321"/>
<dbReference type="EMDB" id="EMD-11325"/>
<dbReference type="EMDB" id="EMD-11335"/>
<dbReference type="EMDB" id="EMD-11440"/>
<dbReference type="EMDB" id="EMD-11441"/>
<dbReference type="EMDB" id="EMD-11456"/>
<dbReference type="EMDB" id="EMD-11458"/>
<dbReference type="EMDB" id="EMD-11517"/>
<dbReference type="EMDB" id="EMD-11518"/>
<dbReference type="EMDB" id="EMD-11519"/>
<dbReference type="EMDB" id="EMD-11520"/>
<dbReference type="EMDB" id="EMD-11521"/>
<dbReference type="EMDB" id="EMD-11602"/>
<dbReference type="EMDB" id="EMD-14113"/>
<dbReference type="EMDB" id="EMD-14114"/>
<dbReference type="EMDB" id="EMD-14181"/>
<dbReference type="EMDB" id="EMD-14317"/>
<dbReference type="EMDB" id="EMD-17297"/>
<dbReference type="EMDB" id="EMD-17696"/>
<dbReference type="EMDB" id="EMD-17697"/>
<dbReference type="EMDB" id="EMD-17698"/>
<dbReference type="EMDB" id="EMD-17699"/>
<dbReference type="EMDB" id="EMD-17700"/>
<dbReference type="EMDB" id="EMD-17701"/>
<dbReference type="EMDB" id="EMD-17804"/>
<dbReference type="EMDB" id="EMD-17805"/>
<dbReference type="EMDB" id="EMD-18539"/>
<dbReference type="EMDB" id="EMD-22432"/>
<dbReference type="EMDB" id="EMD-22433"/>
<dbReference type="EMDB" id="EMD-22681"/>
<dbReference type="EMDB" id="EMD-26067"/>
<dbReference type="EMDB" id="EMD-29757"/>
<dbReference type="EMDB" id="EMD-29758"/>
<dbReference type="EMDB" id="EMD-29759"/>
<dbReference type="EMDB" id="EMD-29760"/>
<dbReference type="EMDB" id="EMD-29771"/>
<dbReference type="EMDB" id="EMD-32802"/>
<dbReference type="EMDB" id="EMD-32803"/>
<dbReference type="EMDB" id="EMD-32804"/>
<dbReference type="EMDB" id="EMD-32806"/>
<dbReference type="EMDB" id="EMD-32807"/>
<dbReference type="EMDB" id="EMD-33329"/>
<dbReference type="EMDB" id="EMD-33330"/>
<dbReference type="EMDB" id="EMD-35413"/>
<dbReference type="EMDB" id="EMD-35414"/>
<dbReference type="EMDB" id="EMD-36178"/>
<dbReference type="EMDB" id="EMD-36179"/>
<dbReference type="EMDB" id="EMD-36180"/>
<dbReference type="EMDB" id="EMD-36181"/>
<dbReference type="EMDB" id="EMD-36838"/>
<dbReference type="EMDB" id="EMD-3770"/>
<dbReference type="EMDB" id="EMD-38548"/>
<dbReference type="EMDB" id="EMD-38549"/>
<dbReference type="EMDB" id="EMD-38629"/>
<dbReference type="EMDB" id="EMD-38630"/>
<dbReference type="EMDB" id="EMD-38631"/>
<dbReference type="EMDB" id="EMD-38752"/>
<dbReference type="EMDB" id="EMD-38753"/>
<dbReference type="EMDB" id="EMD-38754"/>
<dbReference type="EMDB" id="EMD-3883"/>
<dbReference type="EMDB" id="EMD-39455"/>
<dbReference type="EMDB" id="EMD-39456"/>
<dbReference type="EMDB" id="EMD-39956"/>
<dbReference type="EMDB" id="EMD-39957"/>
<dbReference type="EMDB" id="EMD-39958"/>
<dbReference type="EMDB" id="EMD-40205"/>
<dbReference type="EMDB" id="EMD-4070"/>
<dbReference type="EMDB" id="EMD-41039"/>
<dbReference type="EMDB" id="EMD-42351"/>
<dbReference type="EMDB" id="EMD-4337"/>
<dbReference type="EMDB" id="EMD-4348"/>
<dbReference type="EMDB" id="EMD-4350"/>
<dbReference type="EMDB" id="EMD-4351"/>
<dbReference type="EMDB" id="EMD-4352"/>
<dbReference type="EMDB" id="EMD-4353"/>
<dbReference type="EMDB" id="EMD-44641"/>
<dbReference type="EMDB" id="EMD-44671"/>
<dbReference type="EMDB" id="EMD-45170"/>
<dbReference type="EMDB" id="EMD-51132"/>
<dbReference type="EMDB" id="EMD-51134"/>
<dbReference type="EMDB" id="EMD-9701"/>
<dbReference type="EMDB" id="EMD-9702"/>
<dbReference type="EMDB" id="EMD-9703"/>
<dbReference type="SMR" id="P15880"/>
<dbReference type="BioGRID" id="112101">
    <property type="interactions" value="693"/>
</dbReference>
<dbReference type="ComplexPortal" id="CPX-5223">
    <property type="entry name" value="40S cytosolic small ribosomal subunit"/>
</dbReference>
<dbReference type="CORUM" id="P15880"/>
<dbReference type="FunCoup" id="P15880">
    <property type="interactions" value="2635"/>
</dbReference>
<dbReference type="IntAct" id="P15880">
    <property type="interactions" value="336"/>
</dbReference>
<dbReference type="MINT" id="P15880"/>
<dbReference type="STRING" id="9606.ENSP00000341885"/>
<dbReference type="DrugBank" id="DB09130">
    <property type="generic name" value="Copper"/>
</dbReference>
<dbReference type="GlyCosmos" id="P15880">
    <property type="glycosylation" value="2 sites, 1 glycan"/>
</dbReference>
<dbReference type="GlyGen" id="P15880">
    <property type="glycosylation" value="3 sites, 1 O-linked glycan (3 sites)"/>
</dbReference>
<dbReference type="iPTMnet" id="P15880"/>
<dbReference type="MetOSite" id="P15880"/>
<dbReference type="PhosphoSitePlus" id="P15880"/>
<dbReference type="SwissPalm" id="P15880"/>
<dbReference type="BioMuta" id="RPS2"/>
<dbReference type="DMDM" id="1710756"/>
<dbReference type="jPOST" id="P15880"/>
<dbReference type="MassIVE" id="P15880"/>
<dbReference type="PaxDb" id="9606-ENSP00000341885"/>
<dbReference type="PeptideAtlas" id="P15880"/>
<dbReference type="PRIDE" id="P15880"/>
<dbReference type="ProteomicsDB" id="53233"/>
<dbReference type="Pumba" id="P15880"/>
<dbReference type="Antibodypedia" id="23349">
    <property type="antibodies" value="205 antibodies from 31 providers"/>
</dbReference>
<dbReference type="DNASU" id="6187"/>
<dbReference type="Ensembl" id="ENST00000343262.9">
    <property type="protein sequence ID" value="ENSP00000341885.4"/>
    <property type="gene ID" value="ENSG00000140988.16"/>
</dbReference>
<dbReference type="Ensembl" id="ENST00000709238.1">
    <property type="protein sequence ID" value="ENSP00000517575.1"/>
    <property type="gene ID" value="ENSG00000291931.1"/>
</dbReference>
<dbReference type="GeneID" id="6187"/>
<dbReference type="KEGG" id="hsa:6187"/>
<dbReference type="MANE-Select" id="ENST00000343262.9">
    <property type="protein sequence ID" value="ENSP00000341885.4"/>
    <property type="RefSeq nucleotide sequence ID" value="NM_002952.4"/>
    <property type="RefSeq protein sequence ID" value="NP_002943.2"/>
</dbReference>
<dbReference type="UCSC" id="uc002cno.3">
    <property type="organism name" value="human"/>
</dbReference>
<dbReference type="AGR" id="HGNC:10404"/>
<dbReference type="CTD" id="6187"/>
<dbReference type="DisGeNET" id="6187"/>
<dbReference type="GeneCards" id="RPS2"/>
<dbReference type="HGNC" id="HGNC:10404">
    <property type="gene designation" value="RPS2"/>
</dbReference>
<dbReference type="HPA" id="ENSG00000140988">
    <property type="expression patterns" value="Low tissue specificity"/>
</dbReference>
<dbReference type="MIM" id="603624">
    <property type="type" value="gene"/>
</dbReference>
<dbReference type="neXtProt" id="NX_P15880"/>
<dbReference type="OpenTargets" id="ENSG00000140988"/>
<dbReference type="PharmGKB" id="PA34806"/>
<dbReference type="VEuPathDB" id="HostDB:ENSG00000140988"/>
<dbReference type="eggNOG" id="KOG0877">
    <property type="taxonomic scope" value="Eukaryota"/>
</dbReference>
<dbReference type="GeneTree" id="ENSGT00940000153095"/>
<dbReference type="InParanoid" id="P15880"/>
<dbReference type="OMA" id="PYEEWSD"/>
<dbReference type="OrthoDB" id="9517843at2759"/>
<dbReference type="PAN-GO" id="P15880">
    <property type="GO annotations" value="3 GO annotations based on evolutionary models"/>
</dbReference>
<dbReference type="PhylomeDB" id="P15880"/>
<dbReference type="TreeFam" id="TF300806"/>
<dbReference type="PathwayCommons" id="P15880"/>
<dbReference type="Reactome" id="R-HSA-156827">
    <property type="pathway name" value="L13a-mediated translational silencing of Ceruloplasmin expression"/>
</dbReference>
<dbReference type="Reactome" id="R-HSA-156902">
    <property type="pathway name" value="Peptide chain elongation"/>
</dbReference>
<dbReference type="Reactome" id="R-HSA-1799339">
    <property type="pathway name" value="SRP-dependent cotranslational protein targeting to membrane"/>
</dbReference>
<dbReference type="Reactome" id="R-HSA-192823">
    <property type="pathway name" value="Viral mRNA Translation"/>
</dbReference>
<dbReference type="Reactome" id="R-HSA-2408557">
    <property type="pathway name" value="Selenocysteine synthesis"/>
</dbReference>
<dbReference type="Reactome" id="R-HSA-3214858">
    <property type="pathway name" value="RMTs methylate histone arginines"/>
</dbReference>
<dbReference type="Reactome" id="R-HSA-6790901">
    <property type="pathway name" value="rRNA modification in the nucleus and cytosol"/>
</dbReference>
<dbReference type="Reactome" id="R-HSA-6791226">
    <property type="pathway name" value="Major pathway of rRNA processing in the nucleolus and cytosol"/>
</dbReference>
<dbReference type="Reactome" id="R-HSA-72649">
    <property type="pathway name" value="Translation initiation complex formation"/>
</dbReference>
<dbReference type="Reactome" id="R-HSA-72689">
    <property type="pathway name" value="Formation of a pool of free 40S subunits"/>
</dbReference>
<dbReference type="Reactome" id="R-HSA-72695">
    <property type="pathway name" value="Formation of the ternary complex, and subsequently, the 43S complex"/>
</dbReference>
<dbReference type="Reactome" id="R-HSA-72702">
    <property type="pathway name" value="Ribosomal scanning and start codon recognition"/>
</dbReference>
<dbReference type="Reactome" id="R-HSA-72706">
    <property type="pathway name" value="GTP hydrolysis and joining of the 60S ribosomal subunit"/>
</dbReference>
<dbReference type="Reactome" id="R-HSA-72764">
    <property type="pathway name" value="Eukaryotic Translation Termination"/>
</dbReference>
<dbReference type="Reactome" id="R-HSA-8876725">
    <property type="pathway name" value="Protein methylation"/>
</dbReference>
<dbReference type="Reactome" id="R-HSA-9010553">
    <property type="pathway name" value="Regulation of expression of SLITs and ROBOs"/>
</dbReference>
<dbReference type="Reactome" id="R-HSA-9633012">
    <property type="pathway name" value="Response of EIF2AK4 (GCN2) to amino acid deficiency"/>
</dbReference>
<dbReference type="Reactome" id="R-HSA-9735869">
    <property type="pathway name" value="SARS-CoV-1 modulates host translation machinery"/>
</dbReference>
<dbReference type="Reactome" id="R-HSA-9754678">
    <property type="pathway name" value="SARS-CoV-2 modulates host translation machinery"/>
</dbReference>
<dbReference type="Reactome" id="R-HSA-975956">
    <property type="pathway name" value="Nonsense Mediated Decay (NMD) independent of the Exon Junction Complex (EJC)"/>
</dbReference>
<dbReference type="Reactome" id="R-HSA-975957">
    <property type="pathway name" value="Nonsense Mediated Decay (NMD) enhanced by the Exon Junction Complex (EJC)"/>
</dbReference>
<dbReference type="SignaLink" id="P15880"/>
<dbReference type="SIGNOR" id="P15880"/>
<dbReference type="BioGRID-ORCS" id="6187">
    <property type="hits" value="759 hits in 1163 CRISPR screens"/>
</dbReference>
<dbReference type="CD-CODE" id="232F8A39">
    <property type="entry name" value="P-body"/>
</dbReference>
<dbReference type="CD-CODE" id="91857CE7">
    <property type="entry name" value="Nucleolus"/>
</dbReference>
<dbReference type="CD-CODE" id="DEE660B4">
    <property type="entry name" value="Stress granule"/>
</dbReference>
<dbReference type="ChiTaRS" id="RPS2">
    <property type="organism name" value="human"/>
</dbReference>
<dbReference type="GeneWiki" id="RPS2"/>
<dbReference type="GenomeRNAi" id="6187"/>
<dbReference type="Pharos" id="P15880">
    <property type="development level" value="Tbio"/>
</dbReference>
<dbReference type="PRO" id="PR:P15880"/>
<dbReference type="Proteomes" id="UP000005640">
    <property type="component" value="Chromosome 16"/>
</dbReference>
<dbReference type="RNAct" id="P15880">
    <property type="molecule type" value="protein"/>
</dbReference>
<dbReference type="Bgee" id="ENSG00000140988">
    <property type="expression patterns" value="Expressed in stromal cell of endometrium and 97 other cell types or tissues"/>
</dbReference>
<dbReference type="ExpressionAtlas" id="P15880">
    <property type="expression patterns" value="baseline and differential"/>
</dbReference>
<dbReference type="GO" id="GO:0005737">
    <property type="term" value="C:cytoplasm"/>
    <property type="evidence" value="ECO:0000303"/>
    <property type="project" value="ComplexPortal"/>
</dbReference>
<dbReference type="GO" id="GO:0005829">
    <property type="term" value="C:cytosol"/>
    <property type="evidence" value="ECO:0000304"/>
    <property type="project" value="Reactome"/>
</dbReference>
<dbReference type="GO" id="GO:0022626">
    <property type="term" value="C:cytosolic ribosome"/>
    <property type="evidence" value="ECO:0000314"/>
    <property type="project" value="FlyBase"/>
</dbReference>
<dbReference type="GO" id="GO:0022627">
    <property type="term" value="C:cytosolic small ribosomal subunit"/>
    <property type="evidence" value="ECO:0000314"/>
    <property type="project" value="UniProtKB"/>
</dbReference>
<dbReference type="GO" id="GO:0070062">
    <property type="term" value="C:extracellular exosome"/>
    <property type="evidence" value="ECO:0007005"/>
    <property type="project" value="UniProtKB"/>
</dbReference>
<dbReference type="GO" id="GO:0005925">
    <property type="term" value="C:focal adhesion"/>
    <property type="evidence" value="ECO:0007005"/>
    <property type="project" value="UniProtKB"/>
</dbReference>
<dbReference type="GO" id="GO:0016020">
    <property type="term" value="C:membrane"/>
    <property type="evidence" value="ECO:0007005"/>
    <property type="project" value="UniProtKB"/>
</dbReference>
<dbReference type="GO" id="GO:0005654">
    <property type="term" value="C:nucleoplasm"/>
    <property type="evidence" value="ECO:0000314"/>
    <property type="project" value="UniProtKB"/>
</dbReference>
<dbReference type="GO" id="GO:0005634">
    <property type="term" value="C:nucleus"/>
    <property type="evidence" value="ECO:0007005"/>
    <property type="project" value="UniProtKB"/>
</dbReference>
<dbReference type="GO" id="GO:0045296">
    <property type="term" value="F:cadherin binding"/>
    <property type="evidence" value="ECO:0007005"/>
    <property type="project" value="BHF-UCL"/>
</dbReference>
<dbReference type="GO" id="GO:0019899">
    <property type="term" value="F:enzyme binding"/>
    <property type="evidence" value="ECO:0000353"/>
    <property type="project" value="UniProtKB"/>
</dbReference>
<dbReference type="GO" id="GO:0017134">
    <property type="term" value="F:fibroblast growth factor binding"/>
    <property type="evidence" value="ECO:0000353"/>
    <property type="project" value="UniProtKB"/>
</dbReference>
<dbReference type="GO" id="GO:0003729">
    <property type="term" value="F:mRNA binding"/>
    <property type="evidence" value="ECO:0000314"/>
    <property type="project" value="UniProtKB"/>
</dbReference>
<dbReference type="GO" id="GO:0003723">
    <property type="term" value="F:RNA binding"/>
    <property type="evidence" value="ECO:0007005"/>
    <property type="project" value="UniProtKB"/>
</dbReference>
<dbReference type="GO" id="GO:0003735">
    <property type="term" value="F:structural constituent of ribosome"/>
    <property type="evidence" value="ECO:0000314"/>
    <property type="project" value="FlyBase"/>
</dbReference>
<dbReference type="GO" id="GO:0002181">
    <property type="term" value="P:cytoplasmic translation"/>
    <property type="evidence" value="ECO:0000303"/>
    <property type="project" value="ComplexPortal"/>
</dbReference>
<dbReference type="GO" id="GO:0051443">
    <property type="term" value="P:positive regulation of ubiquitin-protein transferase activity"/>
    <property type="evidence" value="ECO:0000314"/>
    <property type="project" value="UniProtKB"/>
</dbReference>
<dbReference type="GO" id="GO:0006412">
    <property type="term" value="P:translation"/>
    <property type="evidence" value="ECO:0000318"/>
    <property type="project" value="GO_Central"/>
</dbReference>
<dbReference type="FunFam" id="3.30.160.20:FF:000133">
    <property type="entry name" value="40S ribosomal protein S2"/>
    <property type="match status" value="1"/>
</dbReference>
<dbReference type="FunFam" id="3.30.230.10:FF:000004">
    <property type="entry name" value="40S ribosomal protein S2"/>
    <property type="match status" value="1"/>
</dbReference>
<dbReference type="Gene3D" id="3.30.160.20">
    <property type="match status" value="1"/>
</dbReference>
<dbReference type="Gene3D" id="3.30.230.10">
    <property type="match status" value="1"/>
</dbReference>
<dbReference type="InterPro" id="IPR020568">
    <property type="entry name" value="Ribosomal_Su5_D2-typ_SF"/>
</dbReference>
<dbReference type="InterPro" id="IPR000851">
    <property type="entry name" value="Ribosomal_uS5"/>
</dbReference>
<dbReference type="InterPro" id="IPR005324">
    <property type="entry name" value="Ribosomal_uS5_C"/>
</dbReference>
<dbReference type="InterPro" id="IPR005711">
    <property type="entry name" value="Ribosomal_uS5_euk/arc"/>
</dbReference>
<dbReference type="InterPro" id="IPR013810">
    <property type="entry name" value="Ribosomal_uS5_N"/>
</dbReference>
<dbReference type="InterPro" id="IPR018192">
    <property type="entry name" value="Ribosomal_uS5_N_CS"/>
</dbReference>
<dbReference type="InterPro" id="IPR014721">
    <property type="entry name" value="Ribsml_uS5_D2-typ_fold_subgr"/>
</dbReference>
<dbReference type="NCBIfam" id="TIGR01020">
    <property type="entry name" value="uS5_euk_arch"/>
    <property type="match status" value="1"/>
</dbReference>
<dbReference type="PANTHER" id="PTHR13718:SF4">
    <property type="entry name" value="40S RIBOSOMAL PROTEIN S2"/>
    <property type="match status" value="1"/>
</dbReference>
<dbReference type="PANTHER" id="PTHR13718">
    <property type="entry name" value="RIBOSOMAL S SUBUNIT"/>
    <property type="match status" value="1"/>
</dbReference>
<dbReference type="Pfam" id="PF00333">
    <property type="entry name" value="Ribosomal_S5"/>
    <property type="match status" value="1"/>
</dbReference>
<dbReference type="Pfam" id="PF03719">
    <property type="entry name" value="Ribosomal_S5_C"/>
    <property type="match status" value="1"/>
</dbReference>
<dbReference type="SUPFAM" id="SSF54768">
    <property type="entry name" value="dsRNA-binding domain-like"/>
    <property type="match status" value="1"/>
</dbReference>
<dbReference type="SUPFAM" id="SSF54211">
    <property type="entry name" value="Ribosomal protein S5 domain 2-like"/>
    <property type="match status" value="1"/>
</dbReference>
<dbReference type="PROSITE" id="PS00585">
    <property type="entry name" value="RIBOSOMAL_S5"/>
    <property type="match status" value="1"/>
</dbReference>
<dbReference type="PROSITE" id="PS50881">
    <property type="entry name" value="S5_DSRBD"/>
    <property type="match status" value="1"/>
</dbReference>
<accession>P15880</accession>
<accession>B2R5G0</accession>
<accession>D3DU82</accession>
<accession>Q3MIB1</accession>